<feature type="chain" id="PRO_1000095925" description="N-(5'-phosphoribosyl)anthranilate isomerase">
    <location>
        <begin position="1"/>
        <end position="220"/>
    </location>
</feature>
<name>TRPF_LEPCP</name>
<sequence length="220" mass="23443">MILSPARTRIKICGLTRPGDVDVAVAAGADAIGLVFYPRSPRHVSLALASDLARRLPPFVTPVGLFVNASPEDVERACEQIPNLLLQFHGDETPAQCEASGRPYLRAARMDPGFDLLNFARSYTSAQAILLDAHVEGYGGGGKVFDWSLIPSDVPRPVVLSGGLNPANVTDGVLRVRPWAVDVSSGVESAKGIKDAVLMRQFCEAVRDADARSIDASSGY</sequence>
<accession>B1XY47</accession>
<reference key="1">
    <citation type="submission" date="2008-03" db="EMBL/GenBank/DDBJ databases">
        <title>Complete sequence of Leptothrix cholodnii SP-6.</title>
        <authorList>
            <consortium name="US DOE Joint Genome Institute"/>
            <person name="Copeland A."/>
            <person name="Lucas S."/>
            <person name="Lapidus A."/>
            <person name="Glavina del Rio T."/>
            <person name="Dalin E."/>
            <person name="Tice H."/>
            <person name="Bruce D."/>
            <person name="Goodwin L."/>
            <person name="Pitluck S."/>
            <person name="Chertkov O."/>
            <person name="Brettin T."/>
            <person name="Detter J.C."/>
            <person name="Han C."/>
            <person name="Kuske C.R."/>
            <person name="Schmutz J."/>
            <person name="Larimer F."/>
            <person name="Land M."/>
            <person name="Hauser L."/>
            <person name="Kyrpides N."/>
            <person name="Lykidis A."/>
            <person name="Emerson D."/>
            <person name="Richardson P."/>
        </authorList>
    </citation>
    <scope>NUCLEOTIDE SEQUENCE [LARGE SCALE GENOMIC DNA]</scope>
    <source>
        <strain>ATCC 51168 / LMG 8142 / SP-6</strain>
    </source>
</reference>
<gene>
    <name evidence="1" type="primary">trpF</name>
    <name type="ordered locus">Lcho_1681</name>
</gene>
<comment type="catalytic activity">
    <reaction evidence="1">
        <text>N-(5-phospho-beta-D-ribosyl)anthranilate = 1-(2-carboxyphenylamino)-1-deoxy-D-ribulose 5-phosphate</text>
        <dbReference type="Rhea" id="RHEA:21540"/>
        <dbReference type="ChEBI" id="CHEBI:18277"/>
        <dbReference type="ChEBI" id="CHEBI:58613"/>
        <dbReference type="EC" id="5.3.1.24"/>
    </reaction>
</comment>
<comment type="pathway">
    <text evidence="1">Amino-acid biosynthesis; L-tryptophan biosynthesis; L-tryptophan from chorismate: step 3/5.</text>
</comment>
<comment type="similarity">
    <text evidence="1">Belongs to the TrpF family.</text>
</comment>
<proteinExistence type="inferred from homology"/>
<keyword id="KW-0028">Amino-acid biosynthesis</keyword>
<keyword id="KW-0057">Aromatic amino acid biosynthesis</keyword>
<keyword id="KW-0413">Isomerase</keyword>
<keyword id="KW-1185">Reference proteome</keyword>
<keyword id="KW-0822">Tryptophan biosynthesis</keyword>
<dbReference type="EC" id="5.3.1.24" evidence="1"/>
<dbReference type="EMBL" id="CP001013">
    <property type="protein sequence ID" value="ACB33948.1"/>
    <property type="molecule type" value="Genomic_DNA"/>
</dbReference>
<dbReference type="RefSeq" id="WP_012346709.1">
    <property type="nucleotide sequence ID" value="NC_010524.1"/>
</dbReference>
<dbReference type="SMR" id="B1XY47"/>
<dbReference type="STRING" id="395495.Lcho_1681"/>
<dbReference type="KEGG" id="lch:Lcho_1681"/>
<dbReference type="eggNOG" id="COG0135">
    <property type="taxonomic scope" value="Bacteria"/>
</dbReference>
<dbReference type="HOGENOM" id="CLU_076364_2_0_4"/>
<dbReference type="OrthoDB" id="9796196at2"/>
<dbReference type="UniPathway" id="UPA00035">
    <property type="reaction ID" value="UER00042"/>
</dbReference>
<dbReference type="Proteomes" id="UP000001693">
    <property type="component" value="Chromosome"/>
</dbReference>
<dbReference type="GO" id="GO:0004640">
    <property type="term" value="F:phosphoribosylanthranilate isomerase activity"/>
    <property type="evidence" value="ECO:0007669"/>
    <property type="project" value="UniProtKB-UniRule"/>
</dbReference>
<dbReference type="GO" id="GO:0000162">
    <property type="term" value="P:L-tryptophan biosynthetic process"/>
    <property type="evidence" value="ECO:0007669"/>
    <property type="project" value="UniProtKB-UniRule"/>
</dbReference>
<dbReference type="CDD" id="cd00405">
    <property type="entry name" value="PRAI"/>
    <property type="match status" value="1"/>
</dbReference>
<dbReference type="FunFam" id="3.20.20.70:FF:000075">
    <property type="entry name" value="Tryptophan biosynthesis protein TRP1"/>
    <property type="match status" value="1"/>
</dbReference>
<dbReference type="Gene3D" id="3.20.20.70">
    <property type="entry name" value="Aldolase class I"/>
    <property type="match status" value="1"/>
</dbReference>
<dbReference type="HAMAP" id="MF_00135">
    <property type="entry name" value="PRAI"/>
    <property type="match status" value="1"/>
</dbReference>
<dbReference type="InterPro" id="IPR013785">
    <property type="entry name" value="Aldolase_TIM"/>
</dbReference>
<dbReference type="InterPro" id="IPR001240">
    <property type="entry name" value="PRAI_dom"/>
</dbReference>
<dbReference type="InterPro" id="IPR011060">
    <property type="entry name" value="RibuloseP-bd_barrel"/>
</dbReference>
<dbReference type="InterPro" id="IPR044643">
    <property type="entry name" value="TrpF_fam"/>
</dbReference>
<dbReference type="NCBIfam" id="NF002298">
    <property type="entry name" value="PRK01222.1-4"/>
    <property type="match status" value="1"/>
</dbReference>
<dbReference type="NCBIfam" id="NF002299">
    <property type="entry name" value="PRK01222.1-6"/>
    <property type="match status" value="1"/>
</dbReference>
<dbReference type="PANTHER" id="PTHR42894">
    <property type="entry name" value="N-(5'-PHOSPHORIBOSYL)ANTHRANILATE ISOMERASE"/>
    <property type="match status" value="1"/>
</dbReference>
<dbReference type="PANTHER" id="PTHR42894:SF1">
    <property type="entry name" value="N-(5'-PHOSPHORIBOSYL)ANTHRANILATE ISOMERASE"/>
    <property type="match status" value="1"/>
</dbReference>
<dbReference type="Pfam" id="PF00697">
    <property type="entry name" value="PRAI"/>
    <property type="match status" value="1"/>
</dbReference>
<dbReference type="SUPFAM" id="SSF51366">
    <property type="entry name" value="Ribulose-phoshate binding barrel"/>
    <property type="match status" value="1"/>
</dbReference>
<protein>
    <recommendedName>
        <fullName evidence="1">N-(5'-phosphoribosyl)anthranilate isomerase</fullName>
        <shortName evidence="1">PRAI</shortName>
        <ecNumber evidence="1">5.3.1.24</ecNumber>
    </recommendedName>
</protein>
<organism>
    <name type="scientific">Leptothrix cholodnii (strain ATCC 51168 / LMG 8142 / SP-6)</name>
    <name type="common">Leptothrix discophora (strain SP-6)</name>
    <dbReference type="NCBI Taxonomy" id="395495"/>
    <lineage>
        <taxon>Bacteria</taxon>
        <taxon>Pseudomonadati</taxon>
        <taxon>Pseudomonadota</taxon>
        <taxon>Betaproteobacteria</taxon>
        <taxon>Burkholderiales</taxon>
        <taxon>Sphaerotilaceae</taxon>
        <taxon>Leptothrix</taxon>
    </lineage>
</organism>
<evidence type="ECO:0000255" key="1">
    <source>
        <dbReference type="HAMAP-Rule" id="MF_00135"/>
    </source>
</evidence>